<protein>
    <recommendedName>
        <fullName evidence="1">Fluoride-specific ion channel FluC 1</fullName>
    </recommendedName>
</protein>
<sequence length="96" mass="10289">MQKLIQGLGVGAGAALGVCVRLALTLWLGDSAWPILTINVLGAFLMGWLRPNAFWGTGFLGGFTTFSAMMLNDVSFYFFTAVGCILAWLAGDRLAR</sequence>
<accession>Q8NMM9</accession>
<comment type="function">
    <text evidence="1">Fluoride-specific ion channel. Important for reducing fluoride concentration in the cell, thus reducing its toxicity.</text>
</comment>
<comment type="catalytic activity">
    <reaction evidence="1">
        <text>fluoride(in) = fluoride(out)</text>
        <dbReference type="Rhea" id="RHEA:76159"/>
        <dbReference type="ChEBI" id="CHEBI:17051"/>
    </reaction>
    <physiologicalReaction direction="left-to-right" evidence="1">
        <dbReference type="Rhea" id="RHEA:76160"/>
    </physiologicalReaction>
</comment>
<comment type="activity regulation">
    <text evidence="1">Na(+) is not transported, but it plays an essential structural role and its presence is essential for fluoride channel function.</text>
</comment>
<comment type="subcellular location">
    <subcellularLocation>
        <location evidence="1">Cell membrane</location>
        <topology evidence="1">Multi-pass membrane protein</topology>
    </subcellularLocation>
</comment>
<comment type="similarity">
    <text evidence="1">Belongs to the fluoride channel Fluc/FEX (TC 1.A.43) family.</text>
</comment>
<proteinExistence type="inferred from homology"/>
<keyword id="KW-1003">Cell membrane</keyword>
<keyword id="KW-0407">Ion channel</keyword>
<keyword id="KW-0406">Ion transport</keyword>
<keyword id="KW-0472">Membrane</keyword>
<keyword id="KW-0479">Metal-binding</keyword>
<keyword id="KW-1185">Reference proteome</keyword>
<keyword id="KW-0915">Sodium</keyword>
<keyword id="KW-0812">Transmembrane</keyword>
<keyword id="KW-1133">Transmembrane helix</keyword>
<keyword id="KW-0813">Transport</keyword>
<reference key="1">
    <citation type="journal article" date="2003" name="Appl. Microbiol. Biotechnol.">
        <title>The Corynebacterium glutamicum genome: features and impacts on biotechnological processes.</title>
        <authorList>
            <person name="Ikeda M."/>
            <person name="Nakagawa S."/>
        </authorList>
    </citation>
    <scope>NUCLEOTIDE SEQUENCE [LARGE SCALE GENOMIC DNA]</scope>
    <source>
        <strain>ATCC 13032 / DSM 20300 / JCM 1318 / BCRC 11384 / CCUG 27702 / LMG 3730 / NBRC 12168 / NCIMB 10025 / NRRL B-2784 / 534</strain>
    </source>
</reference>
<reference key="2">
    <citation type="journal article" date="2003" name="J. Biotechnol.">
        <title>The complete Corynebacterium glutamicum ATCC 13032 genome sequence and its impact on the production of L-aspartate-derived amino acids and vitamins.</title>
        <authorList>
            <person name="Kalinowski J."/>
            <person name="Bathe B."/>
            <person name="Bartels D."/>
            <person name="Bischoff N."/>
            <person name="Bott M."/>
            <person name="Burkovski A."/>
            <person name="Dusch N."/>
            <person name="Eggeling L."/>
            <person name="Eikmanns B.J."/>
            <person name="Gaigalat L."/>
            <person name="Goesmann A."/>
            <person name="Hartmann M."/>
            <person name="Huthmacher K."/>
            <person name="Kraemer R."/>
            <person name="Linke B."/>
            <person name="McHardy A.C."/>
            <person name="Meyer F."/>
            <person name="Moeckel B."/>
            <person name="Pfefferle W."/>
            <person name="Puehler A."/>
            <person name="Rey D.A."/>
            <person name="Rueckert C."/>
            <person name="Rupp O."/>
            <person name="Sahm H."/>
            <person name="Wendisch V.F."/>
            <person name="Wiegraebe I."/>
            <person name="Tauch A."/>
        </authorList>
    </citation>
    <scope>NUCLEOTIDE SEQUENCE [LARGE SCALE GENOMIC DNA]</scope>
    <source>
        <strain>ATCC 13032 / DSM 20300 / JCM 1318 / BCRC 11384 / CCUG 27702 / LMG 3730 / NBRC 12168 / NCIMB 10025 / NRRL B-2784 / 534</strain>
    </source>
</reference>
<evidence type="ECO:0000255" key="1">
    <source>
        <dbReference type="HAMAP-Rule" id="MF_00454"/>
    </source>
</evidence>
<gene>
    <name evidence="1" type="primary">fluC1</name>
    <name evidence="1" type="synonym">crcB1</name>
    <name type="ordered locus">Cgl2542</name>
    <name type="ordered locus">cg2801</name>
</gene>
<organism>
    <name type="scientific">Corynebacterium glutamicum (strain ATCC 13032 / DSM 20300 / JCM 1318 / BCRC 11384 / CCUG 27702 / LMG 3730 / NBRC 12168 / NCIMB 10025 / NRRL B-2784 / 534)</name>
    <dbReference type="NCBI Taxonomy" id="196627"/>
    <lineage>
        <taxon>Bacteria</taxon>
        <taxon>Bacillati</taxon>
        <taxon>Actinomycetota</taxon>
        <taxon>Actinomycetes</taxon>
        <taxon>Mycobacteriales</taxon>
        <taxon>Corynebacteriaceae</taxon>
        <taxon>Corynebacterium</taxon>
    </lineage>
</organism>
<dbReference type="EMBL" id="BA000036">
    <property type="protein sequence ID" value="BAB99935.1"/>
    <property type="molecule type" value="Genomic_DNA"/>
</dbReference>
<dbReference type="EMBL" id="BX927155">
    <property type="protein sequence ID" value="CAF21204.1"/>
    <property type="molecule type" value="Genomic_DNA"/>
</dbReference>
<dbReference type="RefSeq" id="NP_601742.1">
    <property type="nucleotide sequence ID" value="NC_003450.3"/>
</dbReference>
<dbReference type="RefSeq" id="WP_011015200.1">
    <property type="nucleotide sequence ID" value="NC_006958.1"/>
</dbReference>
<dbReference type="SMR" id="Q8NMM9"/>
<dbReference type="STRING" id="196627.cg2801"/>
<dbReference type="KEGG" id="cgb:cg2801"/>
<dbReference type="KEGG" id="cgl:Cgl2542"/>
<dbReference type="PATRIC" id="fig|196627.13.peg.2475"/>
<dbReference type="eggNOG" id="COG0239">
    <property type="taxonomic scope" value="Bacteria"/>
</dbReference>
<dbReference type="HOGENOM" id="CLU_114342_1_3_11"/>
<dbReference type="OrthoDB" id="4408652at2"/>
<dbReference type="BioCyc" id="CORYNE:G18NG-12147-MONOMER"/>
<dbReference type="Proteomes" id="UP000000582">
    <property type="component" value="Chromosome"/>
</dbReference>
<dbReference type="Proteomes" id="UP000001009">
    <property type="component" value="Chromosome"/>
</dbReference>
<dbReference type="GO" id="GO:0005886">
    <property type="term" value="C:plasma membrane"/>
    <property type="evidence" value="ECO:0007669"/>
    <property type="project" value="UniProtKB-SubCell"/>
</dbReference>
<dbReference type="GO" id="GO:0062054">
    <property type="term" value="F:fluoride channel activity"/>
    <property type="evidence" value="ECO:0007669"/>
    <property type="project" value="UniProtKB-UniRule"/>
</dbReference>
<dbReference type="GO" id="GO:0046872">
    <property type="term" value="F:metal ion binding"/>
    <property type="evidence" value="ECO:0007669"/>
    <property type="project" value="UniProtKB-KW"/>
</dbReference>
<dbReference type="GO" id="GO:0140114">
    <property type="term" value="P:cellular detoxification of fluoride"/>
    <property type="evidence" value="ECO:0007669"/>
    <property type="project" value="UniProtKB-UniRule"/>
</dbReference>
<dbReference type="HAMAP" id="MF_00454">
    <property type="entry name" value="FluC"/>
    <property type="match status" value="1"/>
</dbReference>
<dbReference type="InterPro" id="IPR003691">
    <property type="entry name" value="FluC"/>
</dbReference>
<dbReference type="NCBIfam" id="NF001101">
    <property type="entry name" value="PRK00134.1"/>
    <property type="match status" value="1"/>
</dbReference>
<dbReference type="Pfam" id="PF02537">
    <property type="entry name" value="CRCB"/>
    <property type="match status" value="1"/>
</dbReference>
<feature type="chain" id="PRO_0000110092" description="Fluoride-specific ion channel FluC 1">
    <location>
        <begin position="1"/>
        <end position="96"/>
    </location>
</feature>
<feature type="transmembrane region" description="Helical" evidence="1">
    <location>
        <begin position="4"/>
        <end position="24"/>
    </location>
</feature>
<feature type="transmembrane region" description="Helical" evidence="1">
    <location>
        <begin position="26"/>
        <end position="46"/>
    </location>
</feature>
<feature type="transmembrane region" description="Helical" evidence="1">
    <location>
        <begin position="69"/>
        <end position="89"/>
    </location>
</feature>
<feature type="binding site" evidence="1">
    <location>
        <position position="61"/>
    </location>
    <ligand>
        <name>Na(+)</name>
        <dbReference type="ChEBI" id="CHEBI:29101"/>
        <note>structural</note>
    </ligand>
</feature>
<feature type="binding site" evidence="1">
    <location>
        <position position="64"/>
    </location>
    <ligand>
        <name>Na(+)</name>
        <dbReference type="ChEBI" id="CHEBI:29101"/>
        <note>structural</note>
    </ligand>
</feature>
<name>FLUC1_CORGL</name>